<evidence type="ECO:0000250" key="1"/>
<evidence type="ECO:0000250" key="2">
    <source>
        <dbReference type="UniProtKB" id="P05181"/>
    </source>
</evidence>
<evidence type="ECO:0000250" key="3">
    <source>
        <dbReference type="UniProtKB" id="P05182"/>
    </source>
</evidence>
<evidence type="ECO:0000305" key="4"/>
<protein>
    <recommendedName>
        <fullName>Cytochrome P450 2E1</fullName>
        <ecNumber evidence="2">1.14.14.1</ecNumber>
    </recommendedName>
    <alternativeName>
        <fullName>4-nitrophenol 2-hydroxylase</fullName>
        <ecNumber evidence="2">1.14.13.n7</ecNumber>
    </alternativeName>
    <alternativeName>
        <fullName>CYPIIE1</fullName>
    </alternativeName>
    <alternativeName>
        <fullName>Cytochrome P450 isozyme 3A</fullName>
        <shortName>Cytochrome P450 LM3A</shortName>
    </alternativeName>
    <alternativeName>
        <fullName>Cytochrome P450-ALC</fullName>
    </alternativeName>
</protein>
<feature type="chain" id="PRO_0000051757" description="Cytochrome P450 2E1">
    <location>
        <begin position="1"/>
        <end position="493"/>
    </location>
</feature>
<feature type="binding site" evidence="1">
    <location>
        <begin position="298"/>
        <end position="303"/>
    </location>
    <ligand>
        <name>substrate</name>
    </ligand>
</feature>
<feature type="binding site" description="axial binding residue">
    <location>
        <position position="437"/>
    </location>
    <ligand>
        <name>heme</name>
        <dbReference type="ChEBI" id="CHEBI:30413"/>
    </ligand>
    <ligandPart>
        <name>Fe</name>
        <dbReference type="ChEBI" id="CHEBI:18248"/>
    </ligandPart>
</feature>
<name>CP2E1_RABIT</name>
<proteinExistence type="evidence at transcript level"/>
<keyword id="KW-0256">Endoplasmic reticulum</keyword>
<keyword id="KW-0276">Fatty acid metabolism</keyword>
<keyword id="KW-0349">Heme</keyword>
<keyword id="KW-0408">Iron</keyword>
<keyword id="KW-0443">Lipid metabolism</keyword>
<keyword id="KW-0472">Membrane</keyword>
<keyword id="KW-0479">Metal-binding</keyword>
<keyword id="KW-0492">Microsome</keyword>
<keyword id="KW-0496">Mitochondrion</keyword>
<keyword id="KW-0999">Mitochondrion inner membrane</keyword>
<keyword id="KW-0503">Monooxygenase</keyword>
<keyword id="KW-0521">NADP</keyword>
<keyword id="KW-0560">Oxidoreductase</keyword>
<keyword id="KW-1185">Reference proteome</keyword>
<gene>
    <name type="primary">CYP2E1</name>
    <name type="synonym">CYP2E</name>
</gene>
<comment type="function">
    <text evidence="2">A cytochrome P450 monooxygenase involved in the metabolism of fatty acids. Mechanistically, uses molecular oxygen inserting one oxygen atom into a substrate, and reducing the second into a water molecule, with two electrons provided by NADPH via cytochrome P450 reductase (NADPH--hemoprotein reductase). Catalyzes the hydroxylation of carbon-hydrogen bonds. Hydroxylates fatty acids specifically at the omega-1 position displaying the highest catalytic activity for saturated fatty acids. May be involved in the oxidative metabolism of xenobiotics.</text>
</comment>
<comment type="catalytic activity">
    <reaction evidence="2">
        <text>an organic molecule + reduced [NADPH--hemoprotein reductase] + O2 = an alcohol + oxidized [NADPH--hemoprotein reductase] + H2O + H(+)</text>
        <dbReference type="Rhea" id="RHEA:17149"/>
        <dbReference type="Rhea" id="RHEA-COMP:11964"/>
        <dbReference type="Rhea" id="RHEA-COMP:11965"/>
        <dbReference type="ChEBI" id="CHEBI:15377"/>
        <dbReference type="ChEBI" id="CHEBI:15378"/>
        <dbReference type="ChEBI" id="CHEBI:15379"/>
        <dbReference type="ChEBI" id="CHEBI:30879"/>
        <dbReference type="ChEBI" id="CHEBI:57618"/>
        <dbReference type="ChEBI" id="CHEBI:58210"/>
        <dbReference type="ChEBI" id="CHEBI:142491"/>
        <dbReference type="EC" id="1.14.14.1"/>
    </reaction>
    <physiologicalReaction direction="left-to-right" evidence="2">
        <dbReference type="Rhea" id="RHEA:17150"/>
    </physiologicalReaction>
</comment>
<comment type="catalytic activity">
    <reaction evidence="2">
        <text>(5Z,8Z,11Z)-eicosatrienoate + reduced [NADPH--hemoprotein reductase] + O2 = 19-hydroxy-(5Z,8Z,11Z)-eicosatrienoate + oxidized [NADPH--hemoprotein reductase] + H2O + H(+)</text>
        <dbReference type="Rhea" id="RHEA:50076"/>
        <dbReference type="Rhea" id="RHEA-COMP:11964"/>
        <dbReference type="Rhea" id="RHEA-COMP:11965"/>
        <dbReference type="ChEBI" id="CHEBI:15377"/>
        <dbReference type="ChEBI" id="CHEBI:15378"/>
        <dbReference type="ChEBI" id="CHEBI:15379"/>
        <dbReference type="ChEBI" id="CHEBI:57618"/>
        <dbReference type="ChEBI" id="CHEBI:58210"/>
        <dbReference type="ChEBI" id="CHEBI:78043"/>
        <dbReference type="ChEBI" id="CHEBI:132024"/>
    </reaction>
    <physiologicalReaction direction="left-to-right" evidence="2">
        <dbReference type="Rhea" id="RHEA:50077"/>
    </physiologicalReaction>
</comment>
<comment type="catalytic activity">
    <reaction evidence="2">
        <text>(5Z,8Z,11Z,14Z,17Z)-eicosapentaenoate + reduced [NADPH--hemoprotein reductase] + O2 = 19-hydroxy-(5Z,8Z,11Z,14Z,17Z)-eicosapentaenoate + oxidized [NADPH--hemoprotein reductase] + H2O + H(+)</text>
        <dbReference type="Rhea" id="RHEA:39787"/>
        <dbReference type="Rhea" id="RHEA-COMP:11964"/>
        <dbReference type="Rhea" id="RHEA-COMP:11965"/>
        <dbReference type="ChEBI" id="CHEBI:15377"/>
        <dbReference type="ChEBI" id="CHEBI:15378"/>
        <dbReference type="ChEBI" id="CHEBI:15379"/>
        <dbReference type="ChEBI" id="CHEBI:57618"/>
        <dbReference type="ChEBI" id="CHEBI:58210"/>
        <dbReference type="ChEBI" id="CHEBI:58562"/>
        <dbReference type="ChEBI" id="CHEBI:76636"/>
    </reaction>
    <physiologicalReaction direction="left-to-right" evidence="2">
        <dbReference type="Rhea" id="RHEA:39788"/>
    </physiologicalReaction>
</comment>
<comment type="catalytic activity">
    <reaction evidence="2">
        <text>(4Z,7Z,10Z,13Z,16Z,19Z)-docosahexaenoate + reduced [NADPH--hemoprotein reductase] + O2 = 21-hydroxy-(4Z,7Z,10Z,13Z,16Z,19Z)-docosahexaenoate + oxidized [NADPH--hemoprotein reductase] + H2O + H(+)</text>
        <dbReference type="Rhea" id="RHEA:50088"/>
        <dbReference type="Rhea" id="RHEA-COMP:11964"/>
        <dbReference type="Rhea" id="RHEA-COMP:11965"/>
        <dbReference type="ChEBI" id="CHEBI:15377"/>
        <dbReference type="ChEBI" id="CHEBI:15378"/>
        <dbReference type="ChEBI" id="CHEBI:15379"/>
        <dbReference type="ChEBI" id="CHEBI:57618"/>
        <dbReference type="ChEBI" id="CHEBI:58210"/>
        <dbReference type="ChEBI" id="CHEBI:77016"/>
        <dbReference type="ChEBI" id="CHEBI:132025"/>
    </reaction>
    <physiologicalReaction direction="left-to-right" evidence="2">
        <dbReference type="Rhea" id="RHEA:50089"/>
    </physiologicalReaction>
</comment>
<comment type="catalytic activity">
    <reaction evidence="2">
        <text>dodecanoate + reduced [NADPH--hemoprotein reductase] + O2 = 11-hydroxydodecanoate + oxidized [NADPH--hemoprotein reductase] + H2O + H(+)</text>
        <dbReference type="Rhea" id="RHEA:39751"/>
        <dbReference type="Rhea" id="RHEA-COMP:11964"/>
        <dbReference type="Rhea" id="RHEA-COMP:11965"/>
        <dbReference type="ChEBI" id="CHEBI:15377"/>
        <dbReference type="ChEBI" id="CHEBI:15378"/>
        <dbReference type="ChEBI" id="CHEBI:15379"/>
        <dbReference type="ChEBI" id="CHEBI:18262"/>
        <dbReference type="ChEBI" id="CHEBI:57618"/>
        <dbReference type="ChEBI" id="CHEBI:58210"/>
        <dbReference type="ChEBI" id="CHEBI:76628"/>
    </reaction>
    <physiologicalReaction direction="left-to-right" evidence="2">
        <dbReference type="Rhea" id="RHEA:39752"/>
    </physiologicalReaction>
</comment>
<comment type="catalytic activity">
    <reaction evidence="2">
        <text>tetradecanoate + reduced [NADPH--hemoprotein reductase] + O2 = 13-hydroxytetradecanoate + oxidized [NADPH--hemoprotein reductase] + H2O + H(+)</text>
        <dbReference type="Rhea" id="RHEA:50096"/>
        <dbReference type="Rhea" id="RHEA-COMP:11964"/>
        <dbReference type="Rhea" id="RHEA-COMP:11965"/>
        <dbReference type="ChEBI" id="CHEBI:15377"/>
        <dbReference type="ChEBI" id="CHEBI:15378"/>
        <dbReference type="ChEBI" id="CHEBI:15379"/>
        <dbReference type="ChEBI" id="CHEBI:30807"/>
        <dbReference type="ChEBI" id="CHEBI:57618"/>
        <dbReference type="ChEBI" id="CHEBI:58210"/>
        <dbReference type="ChEBI" id="CHEBI:132031"/>
    </reaction>
    <physiologicalReaction direction="left-to-right" evidence="2">
        <dbReference type="Rhea" id="RHEA:50097"/>
    </physiologicalReaction>
</comment>
<comment type="catalytic activity">
    <reaction evidence="2">
        <text>4-nitrophenol + NADPH + O2 + H(+) = 4-nitrocatechol + NADP(+) + H2O</text>
        <dbReference type="Rhea" id="RHEA:26205"/>
        <dbReference type="ChEBI" id="CHEBI:15377"/>
        <dbReference type="ChEBI" id="CHEBI:15378"/>
        <dbReference type="ChEBI" id="CHEBI:15379"/>
        <dbReference type="ChEBI" id="CHEBI:57730"/>
        <dbReference type="ChEBI" id="CHEBI:57783"/>
        <dbReference type="ChEBI" id="CHEBI:57917"/>
        <dbReference type="ChEBI" id="CHEBI:58349"/>
        <dbReference type="EC" id="1.14.13.n7"/>
    </reaction>
    <physiologicalReaction direction="left-to-right" evidence="2">
        <dbReference type="Rhea" id="RHEA:26206"/>
    </physiologicalReaction>
</comment>
<comment type="cofactor">
    <cofactor evidence="1">
        <name>heme</name>
        <dbReference type="ChEBI" id="CHEBI:30413"/>
    </cofactor>
</comment>
<comment type="activity regulation">
    <text evidence="2">The omega-1 hydroxylase activity is stimulated by cytochrome b5.</text>
</comment>
<comment type="pathway">
    <text evidence="2">Lipid metabolism; fatty acid metabolism.</text>
</comment>
<comment type="subunit">
    <text evidence="3">Interacts with chaperones HSP70 and HSP90; this interaction is required for initial targeting to mitochondria.</text>
</comment>
<comment type="subcellular location">
    <subcellularLocation>
        <location evidence="3">Endoplasmic reticulum membrane</location>
        <topology evidence="3">Peripheral membrane protein</topology>
    </subcellularLocation>
    <subcellularLocation>
        <location evidence="3">Microsome membrane</location>
        <topology evidence="3">Peripheral membrane protein</topology>
    </subcellularLocation>
    <subcellularLocation>
        <location evidence="3">Mitochondrion inner membrane</location>
        <topology evidence="3">Peripheral membrane protein</topology>
    </subcellularLocation>
    <text evidence="3">Post-translationally targeted to mitochondria. TOMM70 is required for the translocation across the mitochondrial outer membrane. After translocation into the matrix, associates with the inner membrane as a membrane extrinsic protein.</text>
</comment>
<comment type="induction">
    <text>By ethanol.</text>
</comment>
<comment type="similarity">
    <text evidence="4">Belongs to the cytochrome P450 family.</text>
</comment>
<accession>P08682</accession>
<sequence length="493" mass="56945">MAVLGITVALLGWMVILLFISVWKQIHSSWNLPPGPFPLPIIGNLLQLDLKDIPKSFGRLAERFGPVFTVYLGSRRVVVLHGYKAVREMLLNHKNEFSGRGEIPAFREFKDKGIIFNNGPTWKDTRRFSLTTLRDYGMGKQGNEDRIQKEAHFLLEELRKTQGQPFDPTFVIGCTPFNVIAKILFNDRFDYKDKQALRLMSLFNENFYLLSTPWLQVYNNFSNYLQYMPGSHRKVIKNVSEIKEYTLARVKEHHKSLDPSCPRDFIDSLLIEMEKDKHSTEPLYTLENIAVTVADMFFAGTETTSTTLRYGLLILLKHPEIEEKLHEEIDRVIGPSRMPSVRDRVQMPYMDAVVHEIQRFIDLVPSNLPHEATRDTTFQGYVIPKGTVVIPTLDSLLYDKQEFPDPEKFKPEHFLNEEGKFKYSDYFKPFSAGKRVCVGEGLARMELFLLLSAILQHFNLKPLVDPEDIDLRNITVGFGRVPPRYKLCVIPRS</sequence>
<organism>
    <name type="scientific">Oryctolagus cuniculus</name>
    <name type="common">Rabbit</name>
    <dbReference type="NCBI Taxonomy" id="9986"/>
    <lineage>
        <taxon>Eukaryota</taxon>
        <taxon>Metazoa</taxon>
        <taxon>Chordata</taxon>
        <taxon>Craniata</taxon>
        <taxon>Vertebrata</taxon>
        <taxon>Euteleostomi</taxon>
        <taxon>Mammalia</taxon>
        <taxon>Eutheria</taxon>
        <taxon>Euarchontoglires</taxon>
        <taxon>Glires</taxon>
        <taxon>Lagomorpha</taxon>
        <taxon>Leporidae</taxon>
        <taxon>Oryctolagus</taxon>
    </lineage>
</organism>
<dbReference type="EC" id="1.14.14.1" evidence="2"/>
<dbReference type="EC" id="1.14.13.n7" evidence="2"/>
<dbReference type="EMBL" id="M21363">
    <property type="protein sequence ID" value="AAA31222.1"/>
    <property type="molecule type" value="Genomic_DNA"/>
</dbReference>
<dbReference type="EMBL" id="M21351">
    <property type="protein sequence ID" value="AAA31222.1"/>
    <property type="status" value="JOINED"/>
    <property type="molecule type" value="Genomic_DNA"/>
</dbReference>
<dbReference type="EMBL" id="M21349">
    <property type="protein sequence ID" value="AAA31222.1"/>
    <property type="status" value="JOINED"/>
    <property type="molecule type" value="Genomic_DNA"/>
</dbReference>
<dbReference type="EMBL" id="M21350">
    <property type="protein sequence ID" value="AAA31222.1"/>
    <property type="status" value="JOINED"/>
    <property type="molecule type" value="Genomic_DNA"/>
</dbReference>
<dbReference type="EMBL" id="M21358">
    <property type="protein sequence ID" value="AAA31222.1"/>
    <property type="status" value="JOINED"/>
    <property type="molecule type" value="Genomic_DNA"/>
</dbReference>
<dbReference type="EMBL" id="M21359">
    <property type="protein sequence ID" value="AAA31222.1"/>
    <property type="status" value="JOINED"/>
    <property type="molecule type" value="Genomic_DNA"/>
</dbReference>
<dbReference type="EMBL" id="M21360">
    <property type="protein sequence ID" value="AAA31222.1"/>
    <property type="status" value="JOINED"/>
    <property type="molecule type" value="Genomic_DNA"/>
</dbReference>
<dbReference type="EMBL" id="M21361">
    <property type="protein sequence ID" value="AAA31222.1"/>
    <property type="status" value="JOINED"/>
    <property type="molecule type" value="Genomic_DNA"/>
</dbReference>
<dbReference type="EMBL" id="M15061">
    <property type="protein sequence ID" value="AAA31213.1"/>
    <property type="molecule type" value="mRNA"/>
</dbReference>
<dbReference type="EMBL" id="M19235">
    <property type="protein sequence ID" value="AAA31219.1"/>
    <property type="molecule type" value="mRNA"/>
</dbReference>
<dbReference type="EMBL" id="M18770">
    <property type="protein sequence ID" value="AAA31176.1"/>
    <property type="molecule type" value="Genomic_DNA"/>
</dbReference>
<dbReference type="PIR" id="A27750">
    <property type="entry name" value="A26579"/>
</dbReference>
<dbReference type="RefSeq" id="XP_002718818.1">
    <property type="nucleotide sequence ID" value="XM_002718772.3"/>
</dbReference>
<dbReference type="SMR" id="P08682"/>
<dbReference type="BioGRID" id="1178429">
    <property type="interactions" value="3"/>
</dbReference>
<dbReference type="FunCoup" id="P08682">
    <property type="interactions" value="146"/>
</dbReference>
<dbReference type="STRING" id="9986.ENSOCUP00000043752"/>
<dbReference type="PaxDb" id="9986-ENSOCUP00000006677"/>
<dbReference type="GeneID" id="100342572"/>
<dbReference type="KEGG" id="ocu:100342572"/>
<dbReference type="eggNOG" id="KOG0156">
    <property type="taxonomic scope" value="Eukaryota"/>
</dbReference>
<dbReference type="InParanoid" id="P08682"/>
<dbReference type="OrthoDB" id="1103324at2759"/>
<dbReference type="UniPathway" id="UPA00199"/>
<dbReference type="Proteomes" id="UP000001811">
    <property type="component" value="Unplaced"/>
</dbReference>
<dbReference type="GO" id="GO:0005789">
    <property type="term" value="C:endoplasmic reticulum membrane"/>
    <property type="evidence" value="ECO:0007669"/>
    <property type="project" value="UniProtKB-SubCell"/>
</dbReference>
<dbReference type="GO" id="GO:0005743">
    <property type="term" value="C:mitochondrial inner membrane"/>
    <property type="evidence" value="ECO:0000250"/>
    <property type="project" value="UniProtKB"/>
</dbReference>
<dbReference type="GO" id="GO:0008392">
    <property type="term" value="F:arachidonate epoxygenase activity"/>
    <property type="evidence" value="ECO:0007669"/>
    <property type="project" value="TreeGrafter"/>
</dbReference>
<dbReference type="GO" id="GO:0020037">
    <property type="term" value="F:heme binding"/>
    <property type="evidence" value="ECO:0000250"/>
    <property type="project" value="UniProtKB"/>
</dbReference>
<dbReference type="GO" id="GO:0030544">
    <property type="term" value="F:Hsp70 protein binding"/>
    <property type="evidence" value="ECO:0000250"/>
    <property type="project" value="UniProtKB"/>
</dbReference>
<dbReference type="GO" id="GO:0051879">
    <property type="term" value="F:Hsp90 protein binding"/>
    <property type="evidence" value="ECO:0000250"/>
    <property type="project" value="UniProtKB"/>
</dbReference>
<dbReference type="GO" id="GO:0005506">
    <property type="term" value="F:iron ion binding"/>
    <property type="evidence" value="ECO:0007669"/>
    <property type="project" value="InterPro"/>
</dbReference>
<dbReference type="GO" id="GO:0016712">
    <property type="term" value="F:oxidoreductase activity, acting on paired donors, with incorporation or reduction of molecular oxygen, reduced flavin or flavoprotein as one donor, and incorporation of one atom of oxygen"/>
    <property type="evidence" value="ECO:0007669"/>
    <property type="project" value="UniProtKB-EC"/>
</dbReference>
<dbReference type="GO" id="GO:0019373">
    <property type="term" value="P:epoxygenase P450 pathway"/>
    <property type="evidence" value="ECO:0007669"/>
    <property type="project" value="TreeGrafter"/>
</dbReference>
<dbReference type="GO" id="GO:0006805">
    <property type="term" value="P:xenobiotic metabolic process"/>
    <property type="evidence" value="ECO:0007669"/>
    <property type="project" value="TreeGrafter"/>
</dbReference>
<dbReference type="CDD" id="cd20665">
    <property type="entry name" value="CYP2C-like"/>
    <property type="match status" value="1"/>
</dbReference>
<dbReference type="FunFam" id="1.10.630.10:FF:000001">
    <property type="entry name" value="Cytochrome P450, family 2"/>
    <property type="match status" value="1"/>
</dbReference>
<dbReference type="Gene3D" id="1.10.630.10">
    <property type="entry name" value="Cytochrome P450"/>
    <property type="match status" value="1"/>
</dbReference>
<dbReference type="InterPro" id="IPR001128">
    <property type="entry name" value="Cyt_P450"/>
</dbReference>
<dbReference type="InterPro" id="IPR017972">
    <property type="entry name" value="Cyt_P450_CS"/>
</dbReference>
<dbReference type="InterPro" id="IPR002401">
    <property type="entry name" value="Cyt_P450_E_grp-I"/>
</dbReference>
<dbReference type="InterPro" id="IPR008070">
    <property type="entry name" value="Cyt_P450_E_grp-I_CYP2E-like"/>
</dbReference>
<dbReference type="InterPro" id="IPR036396">
    <property type="entry name" value="Cyt_P450_sf"/>
</dbReference>
<dbReference type="InterPro" id="IPR050182">
    <property type="entry name" value="Cytochrome_P450_fam2"/>
</dbReference>
<dbReference type="PANTHER" id="PTHR24300:SF356">
    <property type="entry name" value="CYTOCHROME P450 2E1"/>
    <property type="match status" value="1"/>
</dbReference>
<dbReference type="PANTHER" id="PTHR24300">
    <property type="entry name" value="CYTOCHROME P450 508A4-RELATED"/>
    <property type="match status" value="1"/>
</dbReference>
<dbReference type="Pfam" id="PF00067">
    <property type="entry name" value="p450"/>
    <property type="match status" value="1"/>
</dbReference>
<dbReference type="PRINTS" id="PR00463">
    <property type="entry name" value="EP450I"/>
</dbReference>
<dbReference type="PRINTS" id="PR01687">
    <property type="entry name" value="EP450ICYP2E"/>
</dbReference>
<dbReference type="PRINTS" id="PR00385">
    <property type="entry name" value="P450"/>
</dbReference>
<dbReference type="SUPFAM" id="SSF48264">
    <property type="entry name" value="Cytochrome P450"/>
    <property type="match status" value="1"/>
</dbReference>
<dbReference type="PROSITE" id="PS00086">
    <property type="entry name" value="CYTOCHROME_P450"/>
    <property type="match status" value="1"/>
</dbReference>
<reference key="1">
    <citation type="journal article" date="1988" name="J. Biol. Chem.">
        <title>Organization and differential expression of two highly similar genes in the rabbit alcohol-inducible cytochrome P-450 subfamily.</title>
        <authorList>
            <person name="Khani S.C."/>
            <person name="Porter T.D."/>
            <person name="Fujita V.S."/>
            <person name="Coon M.J."/>
        </authorList>
    </citation>
    <scope>NUCLEOTIDE SEQUENCE [GENOMIC DNA]</scope>
</reference>
<reference key="2">
    <citation type="journal article" date="1987" name="Proc. Natl. Acad. Sci. U.S.A.">
        <title>cDNA and derived amino acid sequence of ethanol-inducible rabbit liver cytochrome P-450 isozyme 3a (P-450ALC).</title>
        <authorList>
            <person name="Khani S.C."/>
            <person name="Zaphiropoulos P.G."/>
            <person name="Fujita V.S."/>
            <person name="Porter T.D."/>
            <person name="Koop D.R."/>
            <person name="Coon M.J."/>
        </authorList>
    </citation>
    <scope>NUCLEOTIDE SEQUENCE [MRNA] OF 22-493</scope>
</reference>
<reference key="3">
    <citation type="journal article" date="1988" name="Biochemistry">
        <title>Comparison of primary structures deduced from cDNA nucleotide sequences for various forms of liver microsomal cytochrome P-450 from phenobarbital-treated rabbits.</title>
        <authorList>
            <person name="Imai Y."/>
            <person name="Komori M."/>
            <person name="Sato R."/>
        </authorList>
    </citation>
    <scope>NUCLEOTIDE SEQUENCE [MRNA] OF 7-493</scope>
</reference>
<reference key="4">
    <citation type="journal article" date="1988" name="Biochem. Biophys. Res. Commun.">
        <title>Isolation and partial characterization of the gene for cytochrome P-450 3a (P-450ALC) and a second closely related gene.</title>
        <authorList>
            <person name="Khani S.C."/>
            <person name="Porter T.D."/>
            <person name="Coon M.J."/>
        </authorList>
    </citation>
    <scope>NUCLEOTIDE SEQUENCE [GENOMIC DNA] OF 1-59</scope>
</reference>